<name>RSMH_PASMU</name>
<reference key="1">
    <citation type="journal article" date="2001" name="Proc. Natl. Acad. Sci. U.S.A.">
        <title>Complete genomic sequence of Pasteurella multocida Pm70.</title>
        <authorList>
            <person name="May B.J."/>
            <person name="Zhang Q."/>
            <person name="Li L.L."/>
            <person name="Paustian M.L."/>
            <person name="Whittam T.S."/>
            <person name="Kapur V."/>
        </authorList>
    </citation>
    <scope>NUCLEOTIDE SEQUENCE [LARGE SCALE GENOMIC DNA]</scope>
    <source>
        <strain>Pm70</strain>
    </source>
</reference>
<sequence>MNDKDHFSSPAHITVLLNEAVAGLALKEKGIYIDGTFGRGGHSRLILSRLADNGRLIAIDRDPRAIAEAKTIQDPRFHIEHRSFSDIPRICERLNLVGKVDGILLDLGVSSPQLDEAERGFSFMKDGPLDMRMDTTQGLSASEWLQQVSEQDLAWVLKTFGEERFAKRIAQAIVNYNKQALQHGTEPLSRTLQLAELIANAVPFKDKHKHPATRSFQAIRIFINAELDELESVLKSAVQVLAPQGRLAIISFHSLEDRMVKHFMRKQSKGEDIPKGLPLRDDQIQRTQTLKVIGKAIMPTEQEQQQNPRSRSAVLRVAEKL</sequence>
<proteinExistence type="inferred from homology"/>
<comment type="function">
    <text evidence="1">Specifically methylates the N4 position of cytidine in position 1402 (C1402) of 16S rRNA.</text>
</comment>
<comment type="catalytic activity">
    <reaction evidence="1">
        <text>cytidine(1402) in 16S rRNA + S-adenosyl-L-methionine = N(4)-methylcytidine(1402) in 16S rRNA + S-adenosyl-L-homocysteine + H(+)</text>
        <dbReference type="Rhea" id="RHEA:42928"/>
        <dbReference type="Rhea" id="RHEA-COMP:10286"/>
        <dbReference type="Rhea" id="RHEA-COMP:10287"/>
        <dbReference type="ChEBI" id="CHEBI:15378"/>
        <dbReference type="ChEBI" id="CHEBI:57856"/>
        <dbReference type="ChEBI" id="CHEBI:59789"/>
        <dbReference type="ChEBI" id="CHEBI:74506"/>
        <dbReference type="ChEBI" id="CHEBI:82748"/>
        <dbReference type="EC" id="2.1.1.199"/>
    </reaction>
</comment>
<comment type="subcellular location">
    <subcellularLocation>
        <location evidence="1">Cytoplasm</location>
    </subcellularLocation>
</comment>
<comment type="similarity">
    <text evidence="1">Belongs to the methyltransferase superfamily. RsmH family.</text>
</comment>
<accession>Q9CPB4</accession>
<protein>
    <recommendedName>
        <fullName evidence="1">Ribosomal RNA small subunit methyltransferase H</fullName>
        <ecNumber evidence="1">2.1.1.199</ecNumber>
    </recommendedName>
    <alternativeName>
        <fullName evidence="1">16S rRNA m(4)C1402 methyltransferase</fullName>
    </alternativeName>
    <alternativeName>
        <fullName evidence="1">rRNA (cytosine-N(4)-)-methyltransferase RsmH</fullName>
    </alternativeName>
</protein>
<evidence type="ECO:0000255" key="1">
    <source>
        <dbReference type="HAMAP-Rule" id="MF_01007"/>
    </source>
</evidence>
<organism>
    <name type="scientific">Pasteurella multocida (strain Pm70)</name>
    <dbReference type="NCBI Taxonomy" id="272843"/>
    <lineage>
        <taxon>Bacteria</taxon>
        <taxon>Pseudomonadati</taxon>
        <taxon>Pseudomonadota</taxon>
        <taxon>Gammaproteobacteria</taxon>
        <taxon>Pasteurellales</taxon>
        <taxon>Pasteurellaceae</taxon>
        <taxon>Pasteurella</taxon>
    </lineage>
</organism>
<feature type="chain" id="PRO_0000108677" description="Ribosomal RNA small subunit methyltransferase H">
    <location>
        <begin position="1"/>
        <end position="321"/>
    </location>
</feature>
<feature type="binding site" evidence="1">
    <location>
        <begin position="40"/>
        <end position="42"/>
    </location>
    <ligand>
        <name>S-adenosyl-L-methionine</name>
        <dbReference type="ChEBI" id="CHEBI:59789"/>
    </ligand>
</feature>
<feature type="binding site" evidence="1">
    <location>
        <position position="60"/>
    </location>
    <ligand>
        <name>S-adenosyl-L-methionine</name>
        <dbReference type="ChEBI" id="CHEBI:59789"/>
    </ligand>
</feature>
<feature type="binding site" evidence="1">
    <location>
        <position position="84"/>
    </location>
    <ligand>
        <name>S-adenosyl-L-methionine</name>
        <dbReference type="ChEBI" id="CHEBI:59789"/>
    </ligand>
</feature>
<feature type="binding site" evidence="1">
    <location>
        <position position="106"/>
    </location>
    <ligand>
        <name>S-adenosyl-L-methionine</name>
        <dbReference type="ChEBI" id="CHEBI:59789"/>
    </ligand>
</feature>
<feature type="binding site" evidence="1">
    <location>
        <position position="113"/>
    </location>
    <ligand>
        <name>S-adenosyl-L-methionine</name>
        <dbReference type="ChEBI" id="CHEBI:59789"/>
    </ligand>
</feature>
<gene>
    <name evidence="1" type="primary">rsmH</name>
    <name type="synonym">mraW</name>
    <name type="ordered locus">PM0134</name>
</gene>
<keyword id="KW-0963">Cytoplasm</keyword>
<keyword id="KW-0489">Methyltransferase</keyword>
<keyword id="KW-1185">Reference proteome</keyword>
<keyword id="KW-0698">rRNA processing</keyword>
<keyword id="KW-0949">S-adenosyl-L-methionine</keyword>
<keyword id="KW-0808">Transferase</keyword>
<dbReference type="EC" id="2.1.1.199" evidence="1"/>
<dbReference type="EMBL" id="AE004439">
    <property type="protein sequence ID" value="AAK02218.1"/>
    <property type="molecule type" value="Genomic_DNA"/>
</dbReference>
<dbReference type="RefSeq" id="WP_005755939.1">
    <property type="nucleotide sequence ID" value="NC_002663.1"/>
</dbReference>
<dbReference type="SMR" id="Q9CPB4"/>
<dbReference type="STRING" id="272843.PM0134"/>
<dbReference type="EnsemblBacteria" id="AAK02218">
    <property type="protein sequence ID" value="AAK02218"/>
    <property type="gene ID" value="PM0134"/>
</dbReference>
<dbReference type="GeneID" id="77207482"/>
<dbReference type="KEGG" id="pmu:PM0134"/>
<dbReference type="HOGENOM" id="CLU_038422_2_0_6"/>
<dbReference type="OrthoDB" id="9806637at2"/>
<dbReference type="Proteomes" id="UP000000809">
    <property type="component" value="Chromosome"/>
</dbReference>
<dbReference type="GO" id="GO:0005737">
    <property type="term" value="C:cytoplasm"/>
    <property type="evidence" value="ECO:0007669"/>
    <property type="project" value="UniProtKB-SubCell"/>
</dbReference>
<dbReference type="GO" id="GO:0071424">
    <property type="term" value="F:rRNA (cytosine-N4-)-methyltransferase activity"/>
    <property type="evidence" value="ECO:0007669"/>
    <property type="project" value="UniProtKB-UniRule"/>
</dbReference>
<dbReference type="GO" id="GO:0070475">
    <property type="term" value="P:rRNA base methylation"/>
    <property type="evidence" value="ECO:0007669"/>
    <property type="project" value="UniProtKB-UniRule"/>
</dbReference>
<dbReference type="FunFam" id="1.10.150.170:FF:000001">
    <property type="entry name" value="Ribosomal RNA small subunit methyltransferase H"/>
    <property type="match status" value="1"/>
</dbReference>
<dbReference type="Gene3D" id="1.10.150.170">
    <property type="entry name" value="Putative methyltransferase TM0872, insert domain"/>
    <property type="match status" value="1"/>
</dbReference>
<dbReference type="Gene3D" id="3.40.50.150">
    <property type="entry name" value="Vaccinia Virus protein VP39"/>
    <property type="match status" value="1"/>
</dbReference>
<dbReference type="HAMAP" id="MF_01007">
    <property type="entry name" value="16SrRNA_methyltr_H"/>
    <property type="match status" value="1"/>
</dbReference>
<dbReference type="InterPro" id="IPR002903">
    <property type="entry name" value="RsmH"/>
</dbReference>
<dbReference type="InterPro" id="IPR023397">
    <property type="entry name" value="SAM-dep_MeTrfase_MraW_recog"/>
</dbReference>
<dbReference type="InterPro" id="IPR029063">
    <property type="entry name" value="SAM-dependent_MTases_sf"/>
</dbReference>
<dbReference type="NCBIfam" id="TIGR00006">
    <property type="entry name" value="16S rRNA (cytosine(1402)-N(4))-methyltransferase RsmH"/>
    <property type="match status" value="1"/>
</dbReference>
<dbReference type="PANTHER" id="PTHR11265:SF0">
    <property type="entry name" value="12S RRNA N4-METHYLCYTIDINE METHYLTRANSFERASE"/>
    <property type="match status" value="1"/>
</dbReference>
<dbReference type="PANTHER" id="PTHR11265">
    <property type="entry name" value="S-ADENOSYL-METHYLTRANSFERASE MRAW"/>
    <property type="match status" value="1"/>
</dbReference>
<dbReference type="Pfam" id="PF01795">
    <property type="entry name" value="Methyltransf_5"/>
    <property type="match status" value="1"/>
</dbReference>
<dbReference type="PIRSF" id="PIRSF004486">
    <property type="entry name" value="MraW"/>
    <property type="match status" value="1"/>
</dbReference>
<dbReference type="SUPFAM" id="SSF81799">
    <property type="entry name" value="Putative methyltransferase TM0872, insert domain"/>
    <property type="match status" value="1"/>
</dbReference>
<dbReference type="SUPFAM" id="SSF53335">
    <property type="entry name" value="S-adenosyl-L-methionine-dependent methyltransferases"/>
    <property type="match status" value="1"/>
</dbReference>